<sequence length="186" mass="21118">MELSAAAGRRRQAPWREFTGRHRTERSQERGSTPRKERSMGSRQPRKREREPRDCTPTCTNAASVSRSGARRAPGCAGRCITMKNCARAWRELSERACCFQAVPPSNMKQSWLIFLDTTLCSAWLLASSCPRLYAPLISFHCMCFNTVLLFPRLFGPTLSAKIQFNTDLSLRAIAWKCTKDTTTYC</sequence>
<organism>
    <name type="scientific">Homo sapiens</name>
    <name type="common">Human</name>
    <dbReference type="NCBI Taxonomy" id="9606"/>
    <lineage>
        <taxon>Eukaryota</taxon>
        <taxon>Metazoa</taxon>
        <taxon>Chordata</taxon>
        <taxon>Craniata</taxon>
        <taxon>Vertebrata</taxon>
        <taxon>Euteleostomi</taxon>
        <taxon>Mammalia</taxon>
        <taxon>Eutheria</taxon>
        <taxon>Euarchontoglires</taxon>
        <taxon>Primates</taxon>
        <taxon>Haplorrhini</taxon>
        <taxon>Catarrhini</taxon>
        <taxon>Hominidae</taxon>
        <taxon>Homo</taxon>
    </lineage>
</organism>
<protein>
    <recommendedName>
        <fullName>Putative transcriptional regulator encoded by LINC00473</fullName>
    </recommendedName>
</protein>
<accession>A8K010</accession>
<evidence type="ECO:0000256" key="1">
    <source>
        <dbReference type="SAM" id="MobiDB-lite"/>
    </source>
</evidence>
<evidence type="ECO:0000269" key="2">
    <source>
    </source>
</evidence>
<evidence type="ECO:0000305" key="3"/>
<gene>
    <name type="primary">LINC00473</name>
    <name type="synonym">C6orf176</name>
</gene>
<keyword id="KW-1267">Proteomics identification</keyword>
<keyword id="KW-1185">Reference proteome</keyword>
<feature type="chain" id="PRO_0000317269" description="Putative transcriptional regulator encoded by LINC00473">
    <location>
        <begin position="1"/>
        <end position="186"/>
    </location>
</feature>
<feature type="region of interest" description="Disordered" evidence="1">
    <location>
        <begin position="1"/>
        <end position="62"/>
    </location>
</feature>
<feature type="compositionally biased region" description="Basic and acidic residues" evidence="1">
    <location>
        <begin position="18"/>
        <end position="40"/>
    </location>
</feature>
<feature type="sequence conflict" description="In Ref. 1; BAF82064." evidence="3" ref="1">
    <original>R</original>
    <variation>Q</variation>
    <location>
        <position position="30"/>
    </location>
</feature>
<dbReference type="EMBL" id="AK289375">
    <property type="protein sequence ID" value="BAF82064.1"/>
    <property type="molecule type" value="mRNA"/>
</dbReference>
<dbReference type="EMBL" id="BC008632">
    <property type="status" value="NOT_ANNOTATED_CDS"/>
    <property type="molecule type" value="mRNA"/>
</dbReference>
<dbReference type="BioMuta" id="HGNC:21160"/>
<dbReference type="MassIVE" id="A8K010"/>
<dbReference type="ProteomicsDB" id="1830"/>
<dbReference type="AGR" id="HGNC:21160"/>
<dbReference type="GeneCards" id="LINC00473"/>
<dbReference type="HGNC" id="HGNC:21160">
    <property type="gene designation" value="LINC00473"/>
</dbReference>
<dbReference type="neXtProt" id="NX_A8K010"/>
<dbReference type="InParanoid" id="A8K010"/>
<dbReference type="PAN-GO" id="A8K010">
    <property type="GO annotations" value="0 GO annotations based on evolutionary models"/>
</dbReference>
<dbReference type="Pharos" id="A8K010">
    <property type="development level" value="Tdark"/>
</dbReference>
<dbReference type="Proteomes" id="UP000005640">
    <property type="component" value="Unplaced"/>
</dbReference>
<dbReference type="RNAct" id="A8K010">
    <property type="molecule type" value="protein"/>
</dbReference>
<dbReference type="GO" id="GO:0006351">
    <property type="term" value="P:DNA-templated transcription"/>
    <property type="evidence" value="ECO:0000315"/>
    <property type="project" value="UniProtKB"/>
</dbReference>
<name>CF176_HUMAN</name>
<comment type="function">
    <text evidence="2">May play a role in cAMP-mediated gene transcription.</text>
</comment>
<comment type="induction">
    <text evidence="2">Up-regulated upon activation of cAMP signaling.</text>
</comment>
<comment type="caution">
    <text evidence="3">Product of a dubious CDS prediction. May be a non-coding RNA. According to PubMed:22108211, silencing of that gene results in altered transcription of cAMP-responsive genes. However, PubMed:22108211 does not provide evidence that it is due to the absence of the putative protein.</text>
</comment>
<reference key="1">
    <citation type="journal article" date="2004" name="Nat. Genet.">
        <title>Complete sequencing and characterization of 21,243 full-length human cDNAs.</title>
        <authorList>
            <person name="Ota T."/>
            <person name="Suzuki Y."/>
            <person name="Nishikawa T."/>
            <person name="Otsuki T."/>
            <person name="Sugiyama T."/>
            <person name="Irie R."/>
            <person name="Wakamatsu A."/>
            <person name="Hayashi K."/>
            <person name="Sato H."/>
            <person name="Nagai K."/>
            <person name="Kimura K."/>
            <person name="Makita H."/>
            <person name="Sekine M."/>
            <person name="Obayashi M."/>
            <person name="Nishi T."/>
            <person name="Shibahara T."/>
            <person name="Tanaka T."/>
            <person name="Ishii S."/>
            <person name="Yamamoto J."/>
            <person name="Saito K."/>
            <person name="Kawai Y."/>
            <person name="Isono Y."/>
            <person name="Nakamura Y."/>
            <person name="Nagahari K."/>
            <person name="Murakami K."/>
            <person name="Yasuda T."/>
            <person name="Iwayanagi T."/>
            <person name="Wagatsuma M."/>
            <person name="Shiratori A."/>
            <person name="Sudo H."/>
            <person name="Hosoiri T."/>
            <person name="Kaku Y."/>
            <person name="Kodaira H."/>
            <person name="Kondo H."/>
            <person name="Sugawara M."/>
            <person name="Takahashi M."/>
            <person name="Kanda K."/>
            <person name="Yokoi T."/>
            <person name="Furuya T."/>
            <person name="Kikkawa E."/>
            <person name="Omura Y."/>
            <person name="Abe K."/>
            <person name="Kamihara K."/>
            <person name="Katsuta N."/>
            <person name="Sato K."/>
            <person name="Tanikawa M."/>
            <person name="Yamazaki M."/>
            <person name="Ninomiya K."/>
            <person name="Ishibashi T."/>
            <person name="Yamashita H."/>
            <person name="Murakawa K."/>
            <person name="Fujimori K."/>
            <person name="Tanai H."/>
            <person name="Kimata M."/>
            <person name="Watanabe M."/>
            <person name="Hiraoka S."/>
            <person name="Chiba Y."/>
            <person name="Ishida S."/>
            <person name="Ono Y."/>
            <person name="Takiguchi S."/>
            <person name="Watanabe S."/>
            <person name="Yosida M."/>
            <person name="Hotuta T."/>
            <person name="Kusano J."/>
            <person name="Kanehori K."/>
            <person name="Takahashi-Fujii A."/>
            <person name="Hara H."/>
            <person name="Tanase T.-O."/>
            <person name="Nomura Y."/>
            <person name="Togiya S."/>
            <person name="Komai F."/>
            <person name="Hara R."/>
            <person name="Takeuchi K."/>
            <person name="Arita M."/>
            <person name="Imose N."/>
            <person name="Musashino K."/>
            <person name="Yuuki H."/>
            <person name="Oshima A."/>
            <person name="Sasaki N."/>
            <person name="Aotsuka S."/>
            <person name="Yoshikawa Y."/>
            <person name="Matsunawa H."/>
            <person name="Ichihara T."/>
            <person name="Shiohata N."/>
            <person name="Sano S."/>
            <person name="Moriya S."/>
            <person name="Momiyama H."/>
            <person name="Satoh N."/>
            <person name="Takami S."/>
            <person name="Terashima Y."/>
            <person name="Suzuki O."/>
            <person name="Nakagawa S."/>
            <person name="Senoh A."/>
            <person name="Mizoguchi H."/>
            <person name="Goto Y."/>
            <person name="Shimizu F."/>
            <person name="Wakebe H."/>
            <person name="Hishigaki H."/>
            <person name="Watanabe T."/>
            <person name="Sugiyama A."/>
            <person name="Takemoto M."/>
            <person name="Kawakami B."/>
            <person name="Yamazaki M."/>
            <person name="Watanabe K."/>
            <person name="Kumagai A."/>
            <person name="Itakura S."/>
            <person name="Fukuzumi Y."/>
            <person name="Fujimori Y."/>
            <person name="Komiyama M."/>
            <person name="Tashiro H."/>
            <person name="Tanigami A."/>
            <person name="Fujiwara T."/>
            <person name="Ono T."/>
            <person name="Yamada K."/>
            <person name="Fujii Y."/>
            <person name="Ozaki K."/>
            <person name="Hirao M."/>
            <person name="Ohmori Y."/>
            <person name="Kawabata A."/>
            <person name="Hikiji T."/>
            <person name="Kobatake N."/>
            <person name="Inagaki H."/>
            <person name="Ikema Y."/>
            <person name="Okamoto S."/>
            <person name="Okitani R."/>
            <person name="Kawakami T."/>
            <person name="Noguchi S."/>
            <person name="Itoh T."/>
            <person name="Shigeta K."/>
            <person name="Senba T."/>
            <person name="Matsumura K."/>
            <person name="Nakajima Y."/>
            <person name="Mizuno T."/>
            <person name="Morinaga M."/>
            <person name="Sasaki M."/>
            <person name="Togashi T."/>
            <person name="Oyama M."/>
            <person name="Hata H."/>
            <person name="Watanabe M."/>
            <person name="Komatsu T."/>
            <person name="Mizushima-Sugano J."/>
            <person name="Satoh T."/>
            <person name="Shirai Y."/>
            <person name="Takahashi Y."/>
            <person name="Nakagawa K."/>
            <person name="Okumura K."/>
            <person name="Nagase T."/>
            <person name="Nomura N."/>
            <person name="Kikuchi H."/>
            <person name="Masuho Y."/>
            <person name="Yamashita R."/>
            <person name="Nakai K."/>
            <person name="Yada T."/>
            <person name="Nakamura Y."/>
            <person name="Ohara O."/>
            <person name="Isogai T."/>
            <person name="Sugano S."/>
        </authorList>
    </citation>
    <scope>NUCLEOTIDE SEQUENCE [LARGE SCALE MRNA]</scope>
    <source>
        <tissue>Adrenal gland</tissue>
    </source>
</reference>
<reference key="2">
    <citation type="journal article" date="2004" name="Genome Res.">
        <title>The status, quality, and expansion of the NIH full-length cDNA project: the Mammalian Gene Collection (MGC).</title>
        <authorList>
            <consortium name="The MGC Project Team"/>
        </authorList>
    </citation>
    <scope>NUCLEOTIDE SEQUENCE [LARGE SCALE MRNA]</scope>
    <source>
        <tissue>Cervix carcinoma</tissue>
    </source>
</reference>
<reference key="3">
    <citation type="journal article" date="2012" name="Physiol. Genomics">
        <title>C6orf176: a novel possible regulator of cAMP-mediated gene expression.</title>
        <authorList>
            <person name="Reitmair A."/>
            <person name="Sachs G."/>
            <person name="Im W.B."/>
            <person name="Wheeler L."/>
        </authorList>
    </citation>
    <scope>FUNCTION</scope>
    <scope>INDUCTION</scope>
</reference>
<proteinExistence type="uncertain"/>